<accession>Q7VFC6</accession>
<dbReference type="EMBL" id="AE017125">
    <property type="protein sequence ID" value="AAP78348.1"/>
    <property type="molecule type" value="Genomic_DNA"/>
</dbReference>
<dbReference type="RefSeq" id="WP_011116590.1">
    <property type="nucleotide sequence ID" value="NC_004917.1"/>
</dbReference>
<dbReference type="SMR" id="Q7VFC6"/>
<dbReference type="STRING" id="235279.HH_1751"/>
<dbReference type="KEGG" id="hhe:HH_1751"/>
<dbReference type="eggNOG" id="COG0792">
    <property type="taxonomic scope" value="Bacteria"/>
</dbReference>
<dbReference type="HOGENOM" id="CLU_115353_3_2_7"/>
<dbReference type="OrthoDB" id="9794876at2"/>
<dbReference type="Proteomes" id="UP000002495">
    <property type="component" value="Chromosome"/>
</dbReference>
<dbReference type="GO" id="GO:0003676">
    <property type="term" value="F:nucleic acid binding"/>
    <property type="evidence" value="ECO:0007669"/>
    <property type="project" value="InterPro"/>
</dbReference>
<dbReference type="Gene3D" id="3.40.1350.10">
    <property type="match status" value="1"/>
</dbReference>
<dbReference type="HAMAP" id="MF_00048">
    <property type="entry name" value="UPF0102"/>
    <property type="match status" value="1"/>
</dbReference>
<dbReference type="InterPro" id="IPR011335">
    <property type="entry name" value="Restrct_endonuc-II-like"/>
</dbReference>
<dbReference type="InterPro" id="IPR011856">
    <property type="entry name" value="tRNA_endonuc-like_dom_sf"/>
</dbReference>
<dbReference type="InterPro" id="IPR003509">
    <property type="entry name" value="UPF0102_YraN-like"/>
</dbReference>
<dbReference type="NCBIfam" id="NF009152">
    <property type="entry name" value="PRK12497.2-4"/>
    <property type="match status" value="1"/>
</dbReference>
<dbReference type="PANTHER" id="PTHR34039">
    <property type="entry name" value="UPF0102 PROTEIN YRAN"/>
    <property type="match status" value="1"/>
</dbReference>
<dbReference type="PANTHER" id="PTHR34039:SF1">
    <property type="entry name" value="UPF0102 PROTEIN YRAN"/>
    <property type="match status" value="1"/>
</dbReference>
<dbReference type="Pfam" id="PF02021">
    <property type="entry name" value="UPF0102"/>
    <property type="match status" value="1"/>
</dbReference>
<dbReference type="SUPFAM" id="SSF52980">
    <property type="entry name" value="Restriction endonuclease-like"/>
    <property type="match status" value="1"/>
</dbReference>
<feature type="chain" id="PRO_0000336188" description="UPF0102 protein HH_1751">
    <location>
        <begin position="1"/>
        <end position="110"/>
    </location>
</feature>
<evidence type="ECO:0000255" key="1">
    <source>
        <dbReference type="HAMAP-Rule" id="MF_00048"/>
    </source>
</evidence>
<reference key="1">
    <citation type="journal article" date="2003" name="Proc. Natl. Acad. Sci. U.S.A.">
        <title>The complete genome sequence of the carcinogenic bacterium Helicobacter hepaticus.</title>
        <authorList>
            <person name="Suerbaum S."/>
            <person name="Josenhans C."/>
            <person name="Sterzenbach T."/>
            <person name="Drescher B."/>
            <person name="Brandt P."/>
            <person name="Bell M."/>
            <person name="Droege M."/>
            <person name="Fartmann B."/>
            <person name="Fischer H.-P."/>
            <person name="Ge Z."/>
            <person name="Hoerster A."/>
            <person name="Holland R."/>
            <person name="Klein K."/>
            <person name="Koenig J."/>
            <person name="Macko L."/>
            <person name="Mendz G.L."/>
            <person name="Nyakatura G."/>
            <person name="Schauer D.B."/>
            <person name="Shen Z."/>
            <person name="Weber J."/>
            <person name="Frosch M."/>
            <person name="Fox J.G."/>
        </authorList>
    </citation>
    <scope>NUCLEOTIDE SEQUENCE [LARGE SCALE GENOMIC DNA]</scope>
    <source>
        <strain>ATCC 51449 / 3B1</strain>
    </source>
</reference>
<comment type="similarity">
    <text evidence="1">Belongs to the UPF0102 family.</text>
</comment>
<sequence>MNSRHKGTQAEDFACVFLRECGFEILERNFFARYGEIDIIALKDNVVHFIEVKSGESFEPIYNITPSKIKKLTKAIGFYLFTHKITQAYCLDALIIKNGECELIENITLC</sequence>
<name>Y1751_HELHP</name>
<protein>
    <recommendedName>
        <fullName evidence="1">UPF0102 protein HH_1751</fullName>
    </recommendedName>
</protein>
<proteinExistence type="inferred from homology"/>
<keyword id="KW-1185">Reference proteome</keyword>
<gene>
    <name type="ordered locus">HH_1751</name>
</gene>
<organism>
    <name type="scientific">Helicobacter hepaticus (strain ATCC 51449 / 3B1)</name>
    <dbReference type="NCBI Taxonomy" id="235279"/>
    <lineage>
        <taxon>Bacteria</taxon>
        <taxon>Pseudomonadati</taxon>
        <taxon>Campylobacterota</taxon>
        <taxon>Epsilonproteobacteria</taxon>
        <taxon>Campylobacterales</taxon>
        <taxon>Helicobacteraceae</taxon>
        <taxon>Helicobacter</taxon>
    </lineage>
</organism>